<reference key="1">
    <citation type="submission" date="2006-08" db="EMBL/GenBank/DDBJ databases">
        <authorList>
            <consortium name="NIH - Mammalian Gene Collection (MGC) project"/>
        </authorList>
    </citation>
    <scope>NUCLEOTIDE SEQUENCE [LARGE SCALE MRNA]</scope>
    <source>
        <strain>Hereford</strain>
        <tissue>Fetal muscle</tissue>
    </source>
</reference>
<reference key="2">
    <citation type="journal article" date="1989" name="EMBO J.">
        <title>A homologue of the nuclear coded 49 kd subunit of bovine mitochondrial NADH-ubiquinone reductase is coded in chloroplast DNA.</title>
        <authorList>
            <person name="Fearnley I.M."/>
            <person name="Runswick M.J."/>
            <person name="Walker J.E."/>
        </authorList>
    </citation>
    <scope>NUCLEOTIDE SEQUENCE [MRNA] OF 36-463</scope>
    <scope>PROTEIN SEQUENCE OF 34-55</scope>
    <source>
        <tissue>Heart</tissue>
    </source>
</reference>
<reference key="3">
    <citation type="journal article" date="2000" name="Biochemistry">
        <title>Resolution of the membrane domain of bovine complex I into subcomplexes: implications for the structural organization of the enzyme.</title>
        <authorList>
            <person name="Sazanov L.A."/>
            <person name="Peak-Chew S.Y."/>
            <person name="Fearnley I.M."/>
            <person name="Walker J.E."/>
        </authorList>
    </citation>
    <scope>PARTIAL PROTEIN SEQUENCE</scope>
    <scope>SUBUNIT</scope>
    <scope>IDENTIFICATION IN COMPLEX I</scope>
    <scope>SUBCELLULAR LOCATION</scope>
    <scope>FUNCTION</scope>
</reference>
<reference key="4">
    <citation type="journal article" date="2013" name="J. Biol. Chem.">
        <title>Post-translational modifications near the quinone binding site of mammalian complex I.</title>
        <authorList>
            <person name="Carroll J."/>
            <person name="Ding S."/>
            <person name="Fearnley I.M."/>
            <person name="Walker J.E."/>
        </authorList>
    </citation>
    <scope>PARTIAL PROTEIN SEQUENCE</scope>
    <scope>METHYLATION AT ARG-118</scope>
</reference>
<reference key="5">
    <citation type="journal article" date="2008" name="Anal. Biochem.">
        <title>Subunit analysis of bovine heart complex I by reversed-phase high-performance liquid chromatography, electrospray ionization-tandem mass spectrometry, and matrix-assisted laser desorption/ionization-time-of-flight mass spectrometry.</title>
        <authorList>
            <person name="Lemma-Gray P."/>
            <person name="Valusova E."/>
            <person name="Carroll C.A."/>
            <person name="Weintraub S.T."/>
            <person name="Musatov A."/>
            <person name="Robinson N.C."/>
        </authorList>
    </citation>
    <scope>SUBUNIT</scope>
    <scope>IDENTIFICATION IN COMPLEX I</scope>
    <scope>SUBCELLULAR LOCATION</scope>
    <scope>FUNCTION</scope>
</reference>
<reference key="6">
    <citation type="journal article" date="2014" name="Nature">
        <title>Architecture of mammalian respiratory complex I.</title>
        <authorList>
            <person name="Vinothkumar K.R."/>
            <person name="Zhu J."/>
            <person name="Hirst J."/>
        </authorList>
    </citation>
    <scope>SUBUNIT</scope>
    <scope>SUBCELLULAR LOCATION</scope>
    <scope>TOPOLOGY</scope>
</reference>
<gene>
    <name type="primary">NDUFS2</name>
</gene>
<name>NDUS2_BOVIN</name>
<keyword id="KW-0002">3D-structure</keyword>
<keyword id="KW-0004">4Fe-4S</keyword>
<keyword id="KW-0007">Acetylation</keyword>
<keyword id="KW-0903">Direct protein sequencing</keyword>
<keyword id="KW-0249">Electron transport</keyword>
<keyword id="KW-0408">Iron</keyword>
<keyword id="KW-0411">Iron-sulfur</keyword>
<keyword id="KW-0472">Membrane</keyword>
<keyword id="KW-0479">Metal-binding</keyword>
<keyword id="KW-0488">Methylation</keyword>
<keyword id="KW-0496">Mitochondrion</keyword>
<keyword id="KW-0999">Mitochondrion inner membrane</keyword>
<keyword id="KW-0520">NAD</keyword>
<keyword id="KW-0560">Oxidoreductase</keyword>
<keyword id="KW-1185">Reference proteome</keyword>
<keyword id="KW-0679">Respiratory chain</keyword>
<keyword id="KW-0809">Transit peptide</keyword>
<keyword id="KW-1278">Translocase</keyword>
<keyword id="KW-0813">Transport</keyword>
<keyword id="KW-0830">Ubiquinone</keyword>
<protein>
    <recommendedName>
        <fullName>NADH dehydrogenase [ubiquinone] iron-sulfur protein 2, mitochondrial</fullName>
        <ecNumber evidence="2">7.1.1.2</ecNumber>
    </recommendedName>
    <alternativeName>
        <fullName>Complex I-49kD</fullName>
        <shortName>CI-49kD</shortName>
    </alternativeName>
    <alternativeName>
        <fullName>NADH-ubiquinone oxidoreductase 49 kDa subunit</fullName>
    </alternativeName>
</protein>
<evidence type="ECO:0000250" key="1">
    <source>
        <dbReference type="UniProtKB" id="O75306"/>
    </source>
</evidence>
<evidence type="ECO:0000250" key="2">
    <source>
        <dbReference type="UniProtKB" id="Q91WD5"/>
    </source>
</evidence>
<evidence type="ECO:0000255" key="3"/>
<evidence type="ECO:0000269" key="4">
    <source>
    </source>
</evidence>
<evidence type="ECO:0000269" key="5">
    <source>
    </source>
</evidence>
<evidence type="ECO:0000269" key="6">
    <source>
    </source>
</evidence>
<evidence type="ECO:0000269" key="7">
    <source>
    </source>
</evidence>
<evidence type="ECO:0000269" key="8">
    <source>
    </source>
</evidence>
<evidence type="ECO:0000305" key="9"/>
<evidence type="ECO:0000305" key="10">
    <source>
    </source>
</evidence>
<evidence type="ECO:0007829" key="11">
    <source>
        <dbReference type="PDB" id="7QSL"/>
    </source>
</evidence>
<evidence type="ECO:0007829" key="12">
    <source>
        <dbReference type="PDB" id="7QSM"/>
    </source>
</evidence>
<evidence type="ECO:0007829" key="13">
    <source>
        <dbReference type="PDB" id="8Q48"/>
    </source>
</evidence>
<feature type="transit peptide" description="Mitochondrion" evidence="7">
    <location>
        <begin position="1"/>
        <end position="33"/>
    </location>
</feature>
<feature type="chain" id="PRO_0000118582" description="NADH dehydrogenase [ubiquinone] iron-sulfur protein 2, mitochondrial">
    <location>
        <begin position="34"/>
        <end position="463"/>
    </location>
</feature>
<feature type="binding site" evidence="3">
    <location>
        <position position="326"/>
    </location>
    <ligand>
        <name>[4Fe-4S] cluster</name>
        <dbReference type="ChEBI" id="CHEBI:49883"/>
    </ligand>
</feature>
<feature type="binding site" evidence="3">
    <location>
        <position position="332"/>
    </location>
    <ligand>
        <name>[4Fe-4S] cluster</name>
        <dbReference type="ChEBI" id="CHEBI:49883"/>
    </ligand>
</feature>
<feature type="binding site" evidence="3">
    <location>
        <position position="347"/>
    </location>
    <ligand>
        <name>[4Fe-4S] cluster</name>
        <dbReference type="ChEBI" id="CHEBI:49883"/>
    </ligand>
</feature>
<feature type="modified residue" description="N6-acetyllysine" evidence="2">
    <location>
        <position position="62"/>
    </location>
</feature>
<feature type="modified residue" description="Symmetric dimethylarginine" evidence="6">
    <location>
        <position position="118"/>
    </location>
</feature>
<feature type="sequence conflict" description="In Ref. 2; CAA32523." evidence="9" ref="2">
    <original>Q</original>
    <variation>R</variation>
    <location>
        <position position="162"/>
    </location>
</feature>
<feature type="helix" evidence="12">
    <location>
        <begin position="41"/>
        <end position="44"/>
    </location>
</feature>
<feature type="helix" evidence="12">
    <location>
        <begin position="45"/>
        <end position="47"/>
    </location>
</feature>
<feature type="strand" evidence="12">
    <location>
        <begin position="48"/>
        <end position="53"/>
    </location>
</feature>
<feature type="helix" evidence="12">
    <location>
        <begin position="56"/>
        <end position="58"/>
    </location>
</feature>
<feature type="strand" evidence="11">
    <location>
        <begin position="66"/>
        <end position="68"/>
    </location>
</feature>
<feature type="strand" evidence="12">
    <location>
        <begin position="80"/>
        <end position="84"/>
    </location>
</feature>
<feature type="strand" evidence="13">
    <location>
        <begin position="86"/>
        <end position="88"/>
    </location>
</feature>
<feature type="turn" evidence="12">
    <location>
        <begin position="89"/>
        <end position="91"/>
    </location>
</feature>
<feature type="turn" evidence="13">
    <location>
        <begin position="92"/>
        <end position="94"/>
    </location>
</feature>
<feature type="strand" evidence="12">
    <location>
        <begin position="96"/>
        <end position="102"/>
    </location>
</feature>
<feature type="strand" evidence="12">
    <location>
        <begin position="105"/>
        <end position="112"/>
    </location>
</feature>
<feature type="helix" evidence="12">
    <location>
        <begin position="120"/>
        <end position="124"/>
    </location>
</feature>
<feature type="helix" evidence="12">
    <location>
        <begin position="129"/>
        <end position="137"/>
    </location>
</feature>
<feature type="helix" evidence="12">
    <location>
        <begin position="144"/>
        <end position="159"/>
    </location>
</feature>
<feature type="helix" evidence="12">
    <location>
        <begin position="165"/>
        <end position="193"/>
    </location>
</feature>
<feature type="helix" evidence="12">
    <location>
        <begin position="198"/>
        <end position="218"/>
    </location>
</feature>
<feature type="strand" evidence="12">
    <location>
        <begin position="231"/>
        <end position="234"/>
    </location>
</feature>
<feature type="helix" evidence="12">
    <location>
        <begin position="240"/>
        <end position="262"/>
    </location>
</feature>
<feature type="helix" evidence="12">
    <location>
        <begin position="266"/>
        <end position="272"/>
    </location>
</feature>
<feature type="turn" evidence="11">
    <location>
        <begin position="273"/>
        <end position="276"/>
    </location>
</feature>
<feature type="helix" evidence="12">
    <location>
        <begin position="280"/>
        <end position="285"/>
    </location>
</feature>
<feature type="helix" evidence="12">
    <location>
        <begin position="291"/>
        <end position="294"/>
    </location>
</feature>
<feature type="turn" evidence="12">
    <location>
        <begin position="295"/>
        <end position="297"/>
    </location>
</feature>
<feature type="helix" evidence="12">
    <location>
        <begin position="302"/>
        <end position="305"/>
    </location>
</feature>
<feature type="helix" evidence="12">
    <location>
        <begin position="311"/>
        <end position="313"/>
    </location>
</feature>
<feature type="strand" evidence="12">
    <location>
        <begin position="318"/>
        <end position="320"/>
    </location>
</feature>
<feature type="helix" evidence="12">
    <location>
        <begin position="326"/>
        <end position="350"/>
    </location>
</feature>
<feature type="turn" evidence="12">
    <location>
        <begin position="361"/>
        <end position="363"/>
    </location>
</feature>
<feature type="helix" evidence="12">
    <location>
        <begin position="368"/>
        <end position="371"/>
    </location>
</feature>
<feature type="helix" evidence="12">
    <location>
        <begin position="375"/>
        <end position="385"/>
    </location>
</feature>
<feature type="strand" evidence="12">
    <location>
        <begin position="393"/>
        <end position="402"/>
    </location>
</feature>
<feature type="strand" evidence="12">
    <location>
        <begin position="405"/>
        <end position="413"/>
    </location>
</feature>
<feature type="strand" evidence="12">
    <location>
        <begin position="415"/>
        <end position="418"/>
    </location>
</feature>
<feature type="strand" evidence="12">
    <location>
        <begin position="420"/>
        <end position="425"/>
    </location>
</feature>
<feature type="helix" evidence="12">
    <location>
        <begin position="427"/>
        <end position="433"/>
    </location>
</feature>
<feature type="helix" evidence="12">
    <location>
        <begin position="435"/>
        <end position="439"/>
    </location>
</feature>
<feature type="helix" evidence="12">
    <location>
        <begin position="444"/>
        <end position="454"/>
    </location>
</feature>
<feature type="helix" evidence="12">
    <location>
        <begin position="458"/>
        <end position="462"/>
    </location>
</feature>
<comment type="function">
    <text evidence="2 4 5">Core subunit of the mitochondrial membrane respiratory chain NADH dehydrogenase (Complex I) which catalyzes electron transfer from NADH through the respiratory chain, using ubiquinone as an electron acceptor (PubMed:10852722, PubMed:18721790). Essential for the catalytic activity and assembly of complex I (By similarity). Redox-sensitive, critical component of the oxygen-sensing pathway in the pulmonary vasculature which plays a key role in acute pulmonary oxygen-sensing and hypoxic pulmonary vasoconstriction (By similarity). Plays an important role in carotid body sensing of hypoxia (By similarity). Essential for glia-like neural stem and progenitor cell proliferation, differentiation and subsequent oligodendrocyte or neuronal maturation (By similarity).</text>
</comment>
<comment type="catalytic activity">
    <reaction evidence="2">
        <text>a ubiquinone + NADH + 5 H(+)(in) = a ubiquinol + NAD(+) + 4 H(+)(out)</text>
        <dbReference type="Rhea" id="RHEA:29091"/>
        <dbReference type="Rhea" id="RHEA-COMP:9565"/>
        <dbReference type="Rhea" id="RHEA-COMP:9566"/>
        <dbReference type="ChEBI" id="CHEBI:15378"/>
        <dbReference type="ChEBI" id="CHEBI:16389"/>
        <dbReference type="ChEBI" id="CHEBI:17976"/>
        <dbReference type="ChEBI" id="CHEBI:57540"/>
        <dbReference type="ChEBI" id="CHEBI:57945"/>
        <dbReference type="EC" id="7.1.1.2"/>
    </reaction>
</comment>
<comment type="cofactor">
    <cofactor>
        <name>[4Fe-4S] cluster</name>
        <dbReference type="ChEBI" id="CHEBI:49883"/>
    </cofactor>
    <text>Binds 1 [4Fe-4S] cluster.</text>
</comment>
<comment type="subunit">
    <text evidence="1 2 4 5 8">Core subunit of respiratory chain NADH dehydrogenase (Complex I) which is composed of 45 different subunits (PubMed:10852722, PubMed:18721790, PubMed:25209663). Component of the iron-sulfur (IP) fragment of the enzyme (PubMed:25209663). Interacts with NDUFAF3 (By similarity). Interacts with NDUFAF7 (By similarity). Interacts with CERS2 (By similarity).</text>
</comment>
<comment type="subcellular location">
    <subcellularLocation>
        <location evidence="4 5 8">Mitochondrion inner membrane</location>
        <topology evidence="10">Peripheral membrane protein</topology>
        <orientation evidence="10">Matrix side</orientation>
    </subcellularLocation>
</comment>
<comment type="PTM">
    <text evidence="1">Dimethylation at Arg-118 by NDUFAF7 takes place after NDUFS2 assembles into the complex I, leading to stabilize the early intermediate complex.</text>
</comment>
<comment type="similarity">
    <text evidence="9">Belongs to the complex I 49 kDa subunit family.</text>
</comment>
<proteinExistence type="evidence at protein level"/>
<organism>
    <name type="scientific">Bos taurus</name>
    <name type="common">Bovine</name>
    <dbReference type="NCBI Taxonomy" id="9913"/>
    <lineage>
        <taxon>Eukaryota</taxon>
        <taxon>Metazoa</taxon>
        <taxon>Chordata</taxon>
        <taxon>Craniata</taxon>
        <taxon>Vertebrata</taxon>
        <taxon>Euteleostomi</taxon>
        <taxon>Mammalia</taxon>
        <taxon>Eutheria</taxon>
        <taxon>Laurasiatheria</taxon>
        <taxon>Artiodactyla</taxon>
        <taxon>Ruminantia</taxon>
        <taxon>Pecora</taxon>
        <taxon>Bovidae</taxon>
        <taxon>Bovinae</taxon>
        <taxon>Bos</taxon>
    </lineage>
</organism>
<sequence length="463" mass="52556">MAALRALCRLRGAAAQVLRPGAGVRLPIQPSRGARQWQPDVEWAEQYGGAVMYPTKETAHWKPPPWNDVDPPKDTLVSNLTLNFGPQHPAAHGVLRLVMELSGEMVRKCDPHIGLLHRGTEKLIEYKTYLQALPYFDRLDYVSMMCNEQAYSLAVEKLLNIQPPPRAQWIRVLFGEITRLLNHIMAVTTHALDIGAMTPFFWMFEEREKMFEFYERVSGARMHAAYVRPGGVHQDLPLGLMDDIYEFSKNFSLRIDELEEMLTNNRIWRNRTVDIGIVTAEDALNYGFSGVMLRGSGIQWDLRKTQPYDVYDQVEFDVPIGSRGDCYDRYLCRVEEMRQSIRIISQCLNKMPPGEIKVDDAKVSPPKRAEMKTSMESLIHHFKLYTEGYQVPPGATYTAIEAPKGEFGVYLVSDGSSRPYRCKIKAPGFAHLAGLDKMSKGHMLADVVAIIGTQDIVFGEVDR</sequence>
<accession>P17694</accession>
<accession>Q0P5K5</accession>
<dbReference type="EC" id="7.1.1.2" evidence="2"/>
<dbReference type="EMBL" id="BC119924">
    <property type="protein sequence ID" value="AAI19925.1"/>
    <property type="molecule type" value="mRNA"/>
</dbReference>
<dbReference type="EMBL" id="X14338">
    <property type="protein sequence ID" value="CAA32523.1"/>
    <property type="molecule type" value="mRNA"/>
</dbReference>
<dbReference type="PIR" id="S04104">
    <property type="entry name" value="S04104"/>
</dbReference>
<dbReference type="RefSeq" id="NP_001068605.1">
    <property type="nucleotide sequence ID" value="NM_001075137.1"/>
</dbReference>
<dbReference type="PDB" id="5LC5">
    <property type="method" value="EM"/>
    <property type="resolution" value="4.35 A"/>
    <property type="chains" value="D=38-463"/>
</dbReference>
<dbReference type="PDB" id="5LDW">
    <property type="method" value="EM"/>
    <property type="resolution" value="4.27 A"/>
    <property type="chains" value="D=35-463"/>
</dbReference>
<dbReference type="PDB" id="5LDX">
    <property type="method" value="EM"/>
    <property type="resolution" value="5.60 A"/>
    <property type="chains" value="D=35-463"/>
</dbReference>
<dbReference type="PDB" id="5O31">
    <property type="method" value="EM"/>
    <property type="resolution" value="4.13 A"/>
    <property type="chains" value="D=34-463"/>
</dbReference>
<dbReference type="PDB" id="7DGQ">
    <property type="method" value="EM"/>
    <property type="resolution" value="5.00 A"/>
    <property type="chains" value="B=34-463"/>
</dbReference>
<dbReference type="PDB" id="7DGR">
    <property type="method" value="EM"/>
    <property type="resolution" value="4.60 A"/>
    <property type="chains" value="B=34-463"/>
</dbReference>
<dbReference type="PDB" id="7DGS">
    <property type="method" value="EM"/>
    <property type="resolution" value="7.80 A"/>
    <property type="chains" value="B=34-463"/>
</dbReference>
<dbReference type="PDB" id="7DGZ">
    <property type="method" value="EM"/>
    <property type="resolution" value="3.80 A"/>
    <property type="chains" value="B=34-463"/>
</dbReference>
<dbReference type="PDB" id="7DH0">
    <property type="method" value="EM"/>
    <property type="resolution" value="4.20 A"/>
    <property type="chains" value="B=34-463"/>
</dbReference>
<dbReference type="PDB" id="7DKF">
    <property type="method" value="EM"/>
    <property type="resolution" value="8.30 A"/>
    <property type="chains" value="B2=34-463"/>
</dbReference>
<dbReference type="PDB" id="7QSD">
    <property type="method" value="EM"/>
    <property type="resolution" value="3.10 A"/>
    <property type="chains" value="D=1-463"/>
</dbReference>
<dbReference type="PDB" id="7QSK">
    <property type="method" value="EM"/>
    <property type="resolution" value="2.84 A"/>
    <property type="chains" value="D=1-463"/>
</dbReference>
<dbReference type="PDB" id="7QSL">
    <property type="method" value="EM"/>
    <property type="resolution" value="2.76 A"/>
    <property type="chains" value="D=1-463"/>
</dbReference>
<dbReference type="PDB" id="7QSM">
    <property type="method" value="EM"/>
    <property type="resolution" value="2.30 A"/>
    <property type="chains" value="D=1-463"/>
</dbReference>
<dbReference type="PDB" id="7QSN">
    <property type="method" value="EM"/>
    <property type="resolution" value="2.81 A"/>
    <property type="chains" value="D=1-463"/>
</dbReference>
<dbReference type="PDB" id="7QSO">
    <property type="method" value="EM"/>
    <property type="resolution" value="3.02 A"/>
    <property type="chains" value="D=1-463"/>
</dbReference>
<dbReference type="PDB" id="7R41">
    <property type="method" value="EM"/>
    <property type="resolution" value="2.30 A"/>
    <property type="chains" value="D=1-463"/>
</dbReference>
<dbReference type="PDB" id="7R42">
    <property type="method" value="EM"/>
    <property type="resolution" value="2.30 A"/>
    <property type="chains" value="D=1-463"/>
</dbReference>
<dbReference type="PDB" id="7R43">
    <property type="method" value="EM"/>
    <property type="resolution" value="2.40 A"/>
    <property type="chains" value="D=1-463"/>
</dbReference>
<dbReference type="PDB" id="7R44">
    <property type="method" value="EM"/>
    <property type="resolution" value="2.40 A"/>
    <property type="chains" value="D=1-463"/>
</dbReference>
<dbReference type="PDB" id="7R45">
    <property type="method" value="EM"/>
    <property type="resolution" value="2.40 A"/>
    <property type="chains" value="D=1-463"/>
</dbReference>
<dbReference type="PDB" id="7R46">
    <property type="method" value="EM"/>
    <property type="resolution" value="2.40 A"/>
    <property type="chains" value="D=1-463"/>
</dbReference>
<dbReference type="PDB" id="7R47">
    <property type="method" value="EM"/>
    <property type="resolution" value="2.30 A"/>
    <property type="chains" value="D=1-463"/>
</dbReference>
<dbReference type="PDB" id="7R48">
    <property type="method" value="EM"/>
    <property type="resolution" value="2.30 A"/>
    <property type="chains" value="D=1-463"/>
</dbReference>
<dbReference type="PDB" id="7R4C">
    <property type="method" value="EM"/>
    <property type="resolution" value="2.30 A"/>
    <property type="chains" value="D=1-463"/>
</dbReference>
<dbReference type="PDB" id="7R4D">
    <property type="method" value="EM"/>
    <property type="resolution" value="2.30 A"/>
    <property type="chains" value="D=1-463"/>
</dbReference>
<dbReference type="PDB" id="7R4F">
    <property type="method" value="EM"/>
    <property type="resolution" value="2.40 A"/>
    <property type="chains" value="D=1-463"/>
</dbReference>
<dbReference type="PDB" id="7R4G">
    <property type="method" value="EM"/>
    <property type="resolution" value="2.50 A"/>
    <property type="chains" value="D=1-463"/>
</dbReference>
<dbReference type="PDB" id="8Q0A">
    <property type="method" value="EM"/>
    <property type="resolution" value="3.10 A"/>
    <property type="chains" value="D=1-463"/>
</dbReference>
<dbReference type="PDB" id="8Q0F">
    <property type="method" value="EM"/>
    <property type="resolution" value="3.10 A"/>
    <property type="chains" value="D=1-463"/>
</dbReference>
<dbReference type="PDB" id="8Q0J">
    <property type="method" value="EM"/>
    <property type="resolution" value="3.80 A"/>
    <property type="chains" value="D=1-463"/>
</dbReference>
<dbReference type="PDB" id="8Q0M">
    <property type="method" value="EM"/>
    <property type="resolution" value="3.10 A"/>
    <property type="chains" value="D=1-463"/>
</dbReference>
<dbReference type="PDB" id="8Q0O">
    <property type="method" value="EM"/>
    <property type="resolution" value="3.10 A"/>
    <property type="chains" value="D=1-463"/>
</dbReference>
<dbReference type="PDB" id="8Q0Q">
    <property type="method" value="EM"/>
    <property type="resolution" value="3.60 A"/>
    <property type="chains" value="D=1-463"/>
</dbReference>
<dbReference type="PDB" id="8Q1P">
    <property type="method" value="EM"/>
    <property type="resolution" value="2.90 A"/>
    <property type="chains" value="D=1-463"/>
</dbReference>
<dbReference type="PDB" id="8Q1U">
    <property type="method" value="EM"/>
    <property type="resolution" value="3.30 A"/>
    <property type="chains" value="D=1-463"/>
</dbReference>
<dbReference type="PDB" id="8Q1Y">
    <property type="method" value="EM"/>
    <property type="resolution" value="2.60 A"/>
    <property type="chains" value="D=1-463"/>
</dbReference>
<dbReference type="PDB" id="8Q25">
    <property type="method" value="EM"/>
    <property type="resolution" value="2.80 A"/>
    <property type="chains" value="D=1-463"/>
</dbReference>
<dbReference type="PDB" id="8Q45">
    <property type="method" value="EM"/>
    <property type="resolution" value="2.70 A"/>
    <property type="chains" value="D=1-463"/>
</dbReference>
<dbReference type="PDB" id="8Q46">
    <property type="method" value="EM"/>
    <property type="resolution" value="2.60 A"/>
    <property type="chains" value="D=1-463"/>
</dbReference>
<dbReference type="PDB" id="8Q47">
    <property type="method" value="EM"/>
    <property type="resolution" value="2.90 A"/>
    <property type="chains" value="D=1-463"/>
</dbReference>
<dbReference type="PDB" id="8Q48">
    <property type="method" value="EM"/>
    <property type="resolution" value="2.50 A"/>
    <property type="chains" value="D=1-463"/>
</dbReference>
<dbReference type="PDB" id="8Q49">
    <property type="method" value="EM"/>
    <property type="resolution" value="2.60 A"/>
    <property type="chains" value="D=1-463"/>
</dbReference>
<dbReference type="PDB" id="8Q4A">
    <property type="method" value="EM"/>
    <property type="resolution" value="2.60 A"/>
    <property type="chains" value="D=1-463"/>
</dbReference>
<dbReference type="PDBsum" id="5LC5"/>
<dbReference type="PDBsum" id="5LDW"/>
<dbReference type="PDBsum" id="5LDX"/>
<dbReference type="PDBsum" id="5O31"/>
<dbReference type="PDBsum" id="7DGQ"/>
<dbReference type="PDBsum" id="7DGR"/>
<dbReference type="PDBsum" id="7DGS"/>
<dbReference type="PDBsum" id="7DGZ"/>
<dbReference type="PDBsum" id="7DH0"/>
<dbReference type="PDBsum" id="7DKF"/>
<dbReference type="PDBsum" id="7QSD"/>
<dbReference type="PDBsum" id="7QSK"/>
<dbReference type="PDBsum" id="7QSL"/>
<dbReference type="PDBsum" id="7QSM"/>
<dbReference type="PDBsum" id="7QSN"/>
<dbReference type="PDBsum" id="7QSO"/>
<dbReference type="PDBsum" id="7R41"/>
<dbReference type="PDBsum" id="7R42"/>
<dbReference type="PDBsum" id="7R43"/>
<dbReference type="PDBsum" id="7R44"/>
<dbReference type="PDBsum" id="7R45"/>
<dbReference type="PDBsum" id="7R46"/>
<dbReference type="PDBsum" id="7R47"/>
<dbReference type="PDBsum" id="7R48"/>
<dbReference type="PDBsum" id="7R4C"/>
<dbReference type="PDBsum" id="7R4D"/>
<dbReference type="PDBsum" id="7R4F"/>
<dbReference type="PDBsum" id="7R4G"/>
<dbReference type="PDBsum" id="8Q0A"/>
<dbReference type="PDBsum" id="8Q0F"/>
<dbReference type="PDBsum" id="8Q0J"/>
<dbReference type="PDBsum" id="8Q0M"/>
<dbReference type="PDBsum" id="8Q0O"/>
<dbReference type="PDBsum" id="8Q0Q"/>
<dbReference type="PDBsum" id="8Q1P"/>
<dbReference type="PDBsum" id="8Q1U"/>
<dbReference type="PDBsum" id="8Q1Y"/>
<dbReference type="PDBsum" id="8Q25"/>
<dbReference type="PDBsum" id="8Q45"/>
<dbReference type="PDBsum" id="8Q46"/>
<dbReference type="PDBsum" id="8Q47"/>
<dbReference type="PDBsum" id="8Q48"/>
<dbReference type="PDBsum" id="8Q49"/>
<dbReference type="PDBsum" id="8Q4A"/>
<dbReference type="EMDB" id="EMD-14127"/>
<dbReference type="EMDB" id="EMD-14132"/>
<dbReference type="EMDB" id="EMD-14133"/>
<dbReference type="EMDB" id="EMD-14134"/>
<dbReference type="EMDB" id="EMD-14139"/>
<dbReference type="EMDB" id="EMD-14140"/>
<dbReference type="EMDB" id="EMD-14251"/>
<dbReference type="EMDB" id="EMD-14256"/>
<dbReference type="EMDB" id="EMD-14261"/>
<dbReference type="EMDB" id="EMD-14266"/>
<dbReference type="EMDB" id="EMD-14272"/>
<dbReference type="EMDB" id="EMD-14277"/>
<dbReference type="EMDB" id="EMD-14282"/>
<dbReference type="EMDB" id="EMD-14287"/>
<dbReference type="EMDB" id="EMD-14292"/>
<dbReference type="EMDB" id="EMD-14297"/>
<dbReference type="EMDB" id="EMD-14302"/>
<dbReference type="EMDB" id="EMD-14307"/>
<dbReference type="EMDB" id="EMD-18051"/>
<dbReference type="EMDB" id="EMD-18052"/>
<dbReference type="EMDB" id="EMD-18054"/>
<dbReference type="EMDB" id="EMD-18055"/>
<dbReference type="EMDB" id="EMD-18057"/>
<dbReference type="EMDB" id="EMD-18059"/>
<dbReference type="EMDB" id="EMD-18066"/>
<dbReference type="EMDB" id="EMD-18067"/>
<dbReference type="EMDB" id="EMD-18068"/>
<dbReference type="EMDB" id="EMD-18069"/>
<dbReference type="EMDB" id="EMD-18138"/>
<dbReference type="EMDB" id="EMD-18139"/>
<dbReference type="EMDB" id="EMD-18140"/>
<dbReference type="EMDB" id="EMD-18141"/>
<dbReference type="EMDB" id="EMD-18142"/>
<dbReference type="EMDB" id="EMD-18143"/>
<dbReference type="EMDB" id="EMD-30673"/>
<dbReference type="EMDB" id="EMD-30674"/>
<dbReference type="EMDB" id="EMD-30675"/>
<dbReference type="EMDB" id="EMD-30676"/>
<dbReference type="EMDB" id="EMD-30677"/>
<dbReference type="EMDB" id="EMD-30706"/>
<dbReference type="EMDB" id="EMD-3731"/>
<dbReference type="EMDB" id="EMD-4032"/>
<dbReference type="EMDB" id="EMD-4040"/>
<dbReference type="EMDB" id="EMD-4041"/>
<dbReference type="SMR" id="P17694"/>
<dbReference type="CORUM" id="P17694"/>
<dbReference type="DIP" id="DIP-38816N"/>
<dbReference type="FunCoup" id="P17694">
    <property type="interactions" value="2003"/>
</dbReference>
<dbReference type="IntAct" id="P17694">
    <property type="interactions" value="3"/>
</dbReference>
<dbReference type="STRING" id="9913.ENSBTAP00000002852"/>
<dbReference type="TCDB" id="3.D.1.6.1">
    <property type="family name" value="the h+ or na+-translocating nadh dehydrogenase (ndh) family"/>
</dbReference>
<dbReference type="PaxDb" id="9913-ENSBTAP00000002852"/>
<dbReference type="GeneID" id="327697"/>
<dbReference type="KEGG" id="bta:327697"/>
<dbReference type="CTD" id="4720"/>
<dbReference type="VEuPathDB" id="HostDB:ENSBTAG00000002203"/>
<dbReference type="eggNOG" id="KOG2870">
    <property type="taxonomic scope" value="Eukaryota"/>
</dbReference>
<dbReference type="HOGENOM" id="CLU_015134_1_2_1"/>
<dbReference type="InParanoid" id="P17694"/>
<dbReference type="OMA" id="TRMDYLT"/>
<dbReference type="OrthoDB" id="1009at2759"/>
<dbReference type="TreeFam" id="TF300370"/>
<dbReference type="BRENDA" id="7.1.1.2">
    <property type="organism ID" value="908"/>
</dbReference>
<dbReference type="Reactome" id="R-BTA-611105">
    <property type="pathway name" value="Respiratory electron transport"/>
</dbReference>
<dbReference type="Reactome" id="R-BTA-6799198">
    <property type="pathway name" value="Complex I biogenesis"/>
</dbReference>
<dbReference type="Proteomes" id="UP000009136">
    <property type="component" value="Chromosome 3"/>
</dbReference>
<dbReference type="Bgee" id="ENSBTAG00000002203">
    <property type="expression patterns" value="Expressed in cardiac ventricle and 107 other cell types or tissues"/>
</dbReference>
<dbReference type="GO" id="GO:0005743">
    <property type="term" value="C:mitochondrial inner membrane"/>
    <property type="evidence" value="ECO:0000314"/>
    <property type="project" value="UniProtKB"/>
</dbReference>
<dbReference type="GO" id="GO:0005739">
    <property type="term" value="C:mitochondrion"/>
    <property type="evidence" value="ECO:0000250"/>
    <property type="project" value="UniProtKB"/>
</dbReference>
<dbReference type="GO" id="GO:0045271">
    <property type="term" value="C:respiratory chain complex I"/>
    <property type="evidence" value="ECO:0000314"/>
    <property type="project" value="UniProtKB"/>
</dbReference>
<dbReference type="GO" id="GO:0051539">
    <property type="term" value="F:4 iron, 4 sulfur cluster binding"/>
    <property type="evidence" value="ECO:0007669"/>
    <property type="project" value="UniProtKB-KW"/>
</dbReference>
<dbReference type="GO" id="GO:0046872">
    <property type="term" value="F:metal ion binding"/>
    <property type="evidence" value="ECO:0007669"/>
    <property type="project" value="UniProtKB-KW"/>
</dbReference>
<dbReference type="GO" id="GO:0051287">
    <property type="term" value="F:NAD binding"/>
    <property type="evidence" value="ECO:0007669"/>
    <property type="project" value="InterPro"/>
</dbReference>
<dbReference type="GO" id="GO:0008137">
    <property type="term" value="F:NADH dehydrogenase (ubiquinone) activity"/>
    <property type="evidence" value="ECO:0000250"/>
    <property type="project" value="UniProtKB"/>
</dbReference>
<dbReference type="GO" id="GO:0019826">
    <property type="term" value="F:oxygen sensor activity"/>
    <property type="evidence" value="ECO:0000250"/>
    <property type="project" value="UniProtKB"/>
</dbReference>
<dbReference type="GO" id="GO:0048038">
    <property type="term" value="F:quinone binding"/>
    <property type="evidence" value="ECO:0007669"/>
    <property type="project" value="InterPro"/>
</dbReference>
<dbReference type="GO" id="GO:0071453">
    <property type="term" value="P:cellular response to oxygen levels"/>
    <property type="evidence" value="ECO:0000250"/>
    <property type="project" value="UniProtKB"/>
</dbReference>
<dbReference type="GO" id="GO:0042063">
    <property type="term" value="P:gliogenesis"/>
    <property type="evidence" value="ECO:0000250"/>
    <property type="project" value="UniProtKB"/>
</dbReference>
<dbReference type="GO" id="GO:0006120">
    <property type="term" value="P:mitochondrial electron transport, NADH to ubiquinone"/>
    <property type="evidence" value="ECO:0000250"/>
    <property type="project" value="UniProtKB"/>
</dbReference>
<dbReference type="GO" id="GO:0032981">
    <property type="term" value="P:mitochondrial respiratory chain complex I assembly"/>
    <property type="evidence" value="ECO:0000250"/>
    <property type="project" value="UniProtKB"/>
</dbReference>
<dbReference type="GO" id="GO:0061351">
    <property type="term" value="P:neural precursor cell proliferation"/>
    <property type="evidence" value="ECO:0000250"/>
    <property type="project" value="UniProtKB"/>
</dbReference>
<dbReference type="GO" id="GO:0022008">
    <property type="term" value="P:neurogenesis"/>
    <property type="evidence" value="ECO:0000250"/>
    <property type="project" value="UniProtKB"/>
</dbReference>
<dbReference type="FunFam" id="1.10.645.10:FF:000005">
    <property type="entry name" value="NADH-quinone oxidoreductase subunit D"/>
    <property type="match status" value="1"/>
</dbReference>
<dbReference type="Gene3D" id="1.10.645.10">
    <property type="entry name" value="Cytochrome-c3 Hydrogenase, chain B"/>
    <property type="match status" value="1"/>
</dbReference>
<dbReference type="HAMAP" id="MF_01358">
    <property type="entry name" value="NDH1_NuoD"/>
    <property type="match status" value="1"/>
</dbReference>
<dbReference type="InterPro" id="IPR001135">
    <property type="entry name" value="NADH_Q_OxRdtase_suD"/>
</dbReference>
<dbReference type="InterPro" id="IPR014029">
    <property type="entry name" value="NADH_UbQ_OxRdtase_49kDa_CS"/>
</dbReference>
<dbReference type="InterPro" id="IPR022885">
    <property type="entry name" value="NDH1_su_D/H"/>
</dbReference>
<dbReference type="InterPro" id="IPR029014">
    <property type="entry name" value="NiFe-Hase_large"/>
</dbReference>
<dbReference type="NCBIfam" id="TIGR01962">
    <property type="entry name" value="NuoD"/>
    <property type="match status" value="1"/>
</dbReference>
<dbReference type="NCBIfam" id="NF004739">
    <property type="entry name" value="PRK06075.1"/>
    <property type="match status" value="1"/>
</dbReference>
<dbReference type="PANTHER" id="PTHR11993:SF10">
    <property type="entry name" value="NADH DEHYDROGENASE [UBIQUINONE] IRON-SULFUR PROTEIN 2, MITOCHONDRIAL"/>
    <property type="match status" value="1"/>
</dbReference>
<dbReference type="PANTHER" id="PTHR11993">
    <property type="entry name" value="NADH-UBIQUINONE OXIDOREDUCTASE 49 KDA SUBUNIT"/>
    <property type="match status" value="1"/>
</dbReference>
<dbReference type="Pfam" id="PF00346">
    <property type="entry name" value="Complex1_49kDa"/>
    <property type="match status" value="1"/>
</dbReference>
<dbReference type="SUPFAM" id="SSF56762">
    <property type="entry name" value="HydB/Nqo4-like"/>
    <property type="match status" value="1"/>
</dbReference>
<dbReference type="PROSITE" id="PS00535">
    <property type="entry name" value="COMPLEX1_49K"/>
    <property type="match status" value="1"/>
</dbReference>